<accession>P55647</accession>
<comment type="subcellular location">
    <subcellularLocation>
        <location evidence="2">Cell membrane</location>
        <topology evidence="2">Multi-pass membrane protein</topology>
    </subcellularLocation>
</comment>
<comment type="similarity">
    <text evidence="2">Belongs to the major facilitator superfamily.</text>
</comment>
<geneLocation type="plasmid">
    <name>sym pNGR234a</name>
</geneLocation>
<protein>
    <recommendedName>
        <fullName>Uncharacterized MFS-type transporter y4rN</fullName>
    </recommendedName>
</protein>
<organism>
    <name type="scientific">Sinorhizobium fredii (strain NBRC 101917 / NGR234)</name>
    <dbReference type="NCBI Taxonomy" id="394"/>
    <lineage>
        <taxon>Bacteria</taxon>
        <taxon>Pseudomonadati</taxon>
        <taxon>Pseudomonadota</taxon>
        <taxon>Alphaproteobacteria</taxon>
        <taxon>Hyphomicrobiales</taxon>
        <taxon>Rhizobiaceae</taxon>
        <taxon>Sinorhizobium/Ensifer group</taxon>
        <taxon>Sinorhizobium</taxon>
    </lineage>
</organism>
<evidence type="ECO:0000255" key="1"/>
<evidence type="ECO:0000305" key="2"/>
<gene>
    <name type="ordered locus">NGR_a01730</name>
    <name type="ORF">y4rN</name>
</gene>
<name>Y4RN_SINFN</name>
<reference key="1">
    <citation type="journal article" date="1997" name="Nature">
        <title>Molecular basis of symbiosis between Rhizobium and legumes.</title>
        <authorList>
            <person name="Freiberg C.A."/>
            <person name="Fellay R."/>
            <person name="Bairoch A."/>
            <person name="Broughton W.J."/>
            <person name="Rosenthal A."/>
            <person name="Perret X."/>
        </authorList>
    </citation>
    <scope>NUCLEOTIDE SEQUENCE [LARGE SCALE GENOMIC DNA]</scope>
    <source>
        <strain>NBRC 101917 / NGR234</strain>
    </source>
</reference>
<reference key="2">
    <citation type="journal article" date="2009" name="Appl. Environ. Microbiol.">
        <title>Rhizobium sp. strain NGR234 possesses a remarkable number of secretion systems.</title>
        <authorList>
            <person name="Schmeisser C."/>
            <person name="Liesegang H."/>
            <person name="Krysciak D."/>
            <person name="Bakkou N."/>
            <person name="Le Quere A."/>
            <person name="Wollherr A."/>
            <person name="Heinemeyer I."/>
            <person name="Morgenstern B."/>
            <person name="Pommerening-Roeser A."/>
            <person name="Flores M."/>
            <person name="Palacios R."/>
            <person name="Brenner S."/>
            <person name="Gottschalk G."/>
            <person name="Schmitz R.A."/>
            <person name="Broughton W.J."/>
            <person name="Perret X."/>
            <person name="Strittmatter A.W."/>
            <person name="Streit W.R."/>
        </authorList>
    </citation>
    <scope>NUCLEOTIDE SEQUENCE [LARGE SCALE GENOMIC DNA]</scope>
    <source>
        <strain>NBRC 101917 / NGR234</strain>
    </source>
</reference>
<sequence>MERQISYRSLSKIPGLFSLLLAATLSRLAGRMFVLTLVLFALARFSSPVLAGWLTFAAIVPGLIVSPLAGVLLDCVGPTIAVRIDMIASTAFITAISLAGWLGWSSPPVVCTLAMLFSLAGPLGIAGIRTLLPRLVPPHALDQANALDTAVYSIVDVVGPAMAGGLVGWLGPEAAMSLIAAACAGAAVCLSQVQRLPGLASSRTSLLRQAIKGIYVVVRQPTLRGLAVSQSLYQMTWGALHVVIPVFVAGNYTVAAGSTVVGLLWALVGIAGGVGALLAGHLCTTGRERHIMTAGMAVTAFATWPIAAEFGFRGLTIGLLLAGAMSGPIDVAMLTLRQRRTNPRQLGRVMSISISVNQAGFPLGAAIAGVVITESLSAIFVLAGITSVLAAIATLSIPPDATPVA</sequence>
<proteinExistence type="inferred from homology"/>
<feature type="chain" id="PRO_0000084885" description="Uncharacterized MFS-type transporter y4rN">
    <location>
        <begin position="1"/>
        <end position="405"/>
    </location>
</feature>
<feature type="transmembrane region" description="Helical" evidence="1">
    <location>
        <begin position="32"/>
        <end position="52"/>
    </location>
</feature>
<feature type="transmembrane region" description="Helical" evidence="1">
    <location>
        <begin position="53"/>
        <end position="73"/>
    </location>
</feature>
<feature type="transmembrane region" description="Helical" evidence="1">
    <location>
        <begin position="84"/>
        <end position="104"/>
    </location>
</feature>
<feature type="transmembrane region" description="Helical" evidence="1">
    <location>
        <begin position="108"/>
        <end position="128"/>
    </location>
</feature>
<feature type="transmembrane region" description="Helical" evidence="1">
    <location>
        <begin position="150"/>
        <end position="170"/>
    </location>
</feature>
<feature type="transmembrane region" description="Helical" evidence="1">
    <location>
        <begin position="171"/>
        <end position="191"/>
    </location>
</feature>
<feature type="transmembrane region" description="Helical" evidence="1">
    <location>
        <begin position="237"/>
        <end position="257"/>
    </location>
</feature>
<feature type="transmembrane region" description="Helical" evidence="1">
    <location>
        <begin position="260"/>
        <end position="280"/>
    </location>
</feature>
<feature type="transmembrane region" description="Helical" evidence="1">
    <location>
        <begin position="291"/>
        <end position="311"/>
    </location>
</feature>
<feature type="transmembrane region" description="Helical" evidence="1">
    <location>
        <begin position="314"/>
        <end position="334"/>
    </location>
</feature>
<feature type="transmembrane region" description="Helical" evidence="1">
    <location>
        <begin position="352"/>
        <end position="372"/>
    </location>
</feature>
<feature type="transmembrane region" description="Helical" evidence="1">
    <location>
        <begin position="378"/>
        <end position="398"/>
    </location>
</feature>
<dbReference type="EMBL" id="U00090">
    <property type="protein sequence ID" value="AAB91839.1"/>
    <property type="molecule type" value="Genomic_DNA"/>
</dbReference>
<dbReference type="RefSeq" id="NP_444052.1">
    <property type="nucleotide sequence ID" value="NC_000914.2"/>
</dbReference>
<dbReference type="RefSeq" id="WP_010875209.1">
    <property type="nucleotide sequence ID" value="NC_000914.2"/>
</dbReference>
<dbReference type="SMR" id="P55647"/>
<dbReference type="KEGG" id="rhi:NGR_a01730"/>
<dbReference type="PATRIC" id="fig|394.7.peg.168"/>
<dbReference type="eggNOG" id="COG2211">
    <property type="taxonomic scope" value="Bacteria"/>
</dbReference>
<dbReference type="HOGENOM" id="CLU_698128_0_0_5"/>
<dbReference type="OrthoDB" id="9135819at2"/>
<dbReference type="Proteomes" id="UP000001054">
    <property type="component" value="Plasmid pNGR234a"/>
</dbReference>
<dbReference type="GO" id="GO:0005886">
    <property type="term" value="C:plasma membrane"/>
    <property type="evidence" value="ECO:0007669"/>
    <property type="project" value="UniProtKB-SubCell"/>
</dbReference>
<dbReference type="GO" id="GO:0022857">
    <property type="term" value="F:transmembrane transporter activity"/>
    <property type="evidence" value="ECO:0007669"/>
    <property type="project" value="InterPro"/>
</dbReference>
<dbReference type="CDD" id="cd06173">
    <property type="entry name" value="MFS_MefA_like"/>
    <property type="match status" value="1"/>
</dbReference>
<dbReference type="Gene3D" id="1.20.1250.20">
    <property type="entry name" value="MFS general substrate transporter like domains"/>
    <property type="match status" value="2"/>
</dbReference>
<dbReference type="InterPro" id="IPR011701">
    <property type="entry name" value="MFS"/>
</dbReference>
<dbReference type="InterPro" id="IPR020846">
    <property type="entry name" value="MFS_dom"/>
</dbReference>
<dbReference type="InterPro" id="IPR036259">
    <property type="entry name" value="MFS_trans_sf"/>
</dbReference>
<dbReference type="PANTHER" id="PTHR23513">
    <property type="entry name" value="INTEGRAL MEMBRANE EFFLUX PROTEIN-RELATED"/>
    <property type="match status" value="1"/>
</dbReference>
<dbReference type="PANTHER" id="PTHR23513:SF11">
    <property type="entry name" value="STAPHYLOFERRIN A TRANSPORTER"/>
    <property type="match status" value="1"/>
</dbReference>
<dbReference type="Pfam" id="PF07690">
    <property type="entry name" value="MFS_1"/>
    <property type="match status" value="2"/>
</dbReference>
<dbReference type="SUPFAM" id="SSF103473">
    <property type="entry name" value="MFS general substrate transporter"/>
    <property type="match status" value="1"/>
</dbReference>
<dbReference type="PROSITE" id="PS50850">
    <property type="entry name" value="MFS"/>
    <property type="match status" value="1"/>
</dbReference>
<keyword id="KW-1003">Cell membrane</keyword>
<keyword id="KW-0472">Membrane</keyword>
<keyword id="KW-0614">Plasmid</keyword>
<keyword id="KW-1185">Reference proteome</keyword>
<keyword id="KW-0812">Transmembrane</keyword>
<keyword id="KW-1133">Transmembrane helix</keyword>